<evidence type="ECO:0000255" key="1">
    <source>
        <dbReference type="HAMAP-Rule" id="MF_01307"/>
    </source>
</evidence>
<evidence type="ECO:0000305" key="2"/>
<sequence length="146" mass="15634">MEINRDEFKEVVVNIGRVTKVVKGGRRFRFNALVVVGNKNGLVGFGLGKAKEVPDAIKKAVDDAFKNIIKVNVKGTTIAHDIEHKYNASKILLKPASEGTGVIAGGSARPVIELAGIKDILTKSLGSNNPYNVVRATIDALSRIKA</sequence>
<organism>
    <name type="scientific">Wolinella succinogenes (strain ATCC 29543 / DSM 1740 / CCUG 13145 / JCM 31913 / LMG 7466 / NCTC 11488 / FDC 602W)</name>
    <name type="common">Vibrio succinogenes</name>
    <dbReference type="NCBI Taxonomy" id="273121"/>
    <lineage>
        <taxon>Bacteria</taxon>
        <taxon>Pseudomonadati</taxon>
        <taxon>Campylobacterota</taxon>
        <taxon>Epsilonproteobacteria</taxon>
        <taxon>Campylobacterales</taxon>
        <taxon>Helicobacteraceae</taxon>
        <taxon>Wolinella</taxon>
    </lineage>
</organism>
<feature type="chain" id="PRO_0000131634" description="Small ribosomal subunit protein uS5">
    <location>
        <begin position="1"/>
        <end position="146"/>
    </location>
</feature>
<feature type="domain" description="S5 DRBM" evidence="1">
    <location>
        <begin position="8"/>
        <end position="71"/>
    </location>
</feature>
<accession>Q7M8E9</accession>
<name>RS5_WOLSU</name>
<proteinExistence type="inferred from homology"/>
<comment type="function">
    <text evidence="1">With S4 and S12 plays an important role in translational accuracy.</text>
</comment>
<comment type="function">
    <text evidence="1">Located at the back of the 30S subunit body where it stabilizes the conformation of the head with respect to the body.</text>
</comment>
<comment type="subunit">
    <text evidence="1">Part of the 30S ribosomal subunit. Contacts proteins S4 and S8.</text>
</comment>
<comment type="domain">
    <text>The N-terminal domain interacts with the head of the 30S subunit; the C-terminal domain interacts with the body and contacts protein S4. The interaction surface between S4 and S5 is involved in control of translational fidelity.</text>
</comment>
<comment type="similarity">
    <text evidence="1">Belongs to the universal ribosomal protein uS5 family.</text>
</comment>
<dbReference type="EMBL" id="BX571661">
    <property type="protein sequence ID" value="CAE10727.1"/>
    <property type="molecule type" value="Genomic_DNA"/>
</dbReference>
<dbReference type="RefSeq" id="WP_011139511.1">
    <property type="nucleotide sequence ID" value="NC_005090.1"/>
</dbReference>
<dbReference type="SMR" id="Q7M8E9"/>
<dbReference type="STRING" id="273121.WS1700"/>
<dbReference type="KEGG" id="wsu:WS1700"/>
<dbReference type="eggNOG" id="COG0098">
    <property type="taxonomic scope" value="Bacteria"/>
</dbReference>
<dbReference type="HOGENOM" id="CLU_065898_2_2_7"/>
<dbReference type="Proteomes" id="UP000000422">
    <property type="component" value="Chromosome"/>
</dbReference>
<dbReference type="GO" id="GO:0015935">
    <property type="term" value="C:small ribosomal subunit"/>
    <property type="evidence" value="ECO:0007669"/>
    <property type="project" value="InterPro"/>
</dbReference>
<dbReference type="GO" id="GO:0019843">
    <property type="term" value="F:rRNA binding"/>
    <property type="evidence" value="ECO:0007669"/>
    <property type="project" value="UniProtKB-UniRule"/>
</dbReference>
<dbReference type="GO" id="GO:0003735">
    <property type="term" value="F:structural constituent of ribosome"/>
    <property type="evidence" value="ECO:0007669"/>
    <property type="project" value="InterPro"/>
</dbReference>
<dbReference type="GO" id="GO:0006412">
    <property type="term" value="P:translation"/>
    <property type="evidence" value="ECO:0007669"/>
    <property type="project" value="UniProtKB-UniRule"/>
</dbReference>
<dbReference type="FunFam" id="3.30.160.20:FF:000001">
    <property type="entry name" value="30S ribosomal protein S5"/>
    <property type="match status" value="1"/>
</dbReference>
<dbReference type="FunFam" id="3.30.230.10:FF:000024">
    <property type="entry name" value="30S ribosomal protein S5"/>
    <property type="match status" value="1"/>
</dbReference>
<dbReference type="Gene3D" id="3.30.160.20">
    <property type="match status" value="1"/>
</dbReference>
<dbReference type="Gene3D" id="3.30.230.10">
    <property type="match status" value="1"/>
</dbReference>
<dbReference type="HAMAP" id="MF_01307_B">
    <property type="entry name" value="Ribosomal_uS5_B"/>
    <property type="match status" value="1"/>
</dbReference>
<dbReference type="InterPro" id="IPR020568">
    <property type="entry name" value="Ribosomal_Su5_D2-typ_SF"/>
</dbReference>
<dbReference type="InterPro" id="IPR000851">
    <property type="entry name" value="Ribosomal_uS5"/>
</dbReference>
<dbReference type="InterPro" id="IPR005712">
    <property type="entry name" value="Ribosomal_uS5_bac-type"/>
</dbReference>
<dbReference type="InterPro" id="IPR005324">
    <property type="entry name" value="Ribosomal_uS5_C"/>
</dbReference>
<dbReference type="InterPro" id="IPR013810">
    <property type="entry name" value="Ribosomal_uS5_N"/>
</dbReference>
<dbReference type="InterPro" id="IPR018192">
    <property type="entry name" value="Ribosomal_uS5_N_CS"/>
</dbReference>
<dbReference type="InterPro" id="IPR014721">
    <property type="entry name" value="Ribsml_uS5_D2-typ_fold_subgr"/>
</dbReference>
<dbReference type="NCBIfam" id="TIGR01021">
    <property type="entry name" value="rpsE_bact"/>
    <property type="match status" value="1"/>
</dbReference>
<dbReference type="PANTHER" id="PTHR48277">
    <property type="entry name" value="MITOCHONDRIAL RIBOSOMAL PROTEIN S5"/>
    <property type="match status" value="1"/>
</dbReference>
<dbReference type="PANTHER" id="PTHR48277:SF1">
    <property type="entry name" value="MITOCHONDRIAL RIBOSOMAL PROTEIN S5"/>
    <property type="match status" value="1"/>
</dbReference>
<dbReference type="Pfam" id="PF00333">
    <property type="entry name" value="Ribosomal_S5"/>
    <property type="match status" value="1"/>
</dbReference>
<dbReference type="Pfam" id="PF03719">
    <property type="entry name" value="Ribosomal_S5_C"/>
    <property type="match status" value="1"/>
</dbReference>
<dbReference type="SUPFAM" id="SSF54768">
    <property type="entry name" value="dsRNA-binding domain-like"/>
    <property type="match status" value="1"/>
</dbReference>
<dbReference type="SUPFAM" id="SSF54211">
    <property type="entry name" value="Ribosomal protein S5 domain 2-like"/>
    <property type="match status" value="1"/>
</dbReference>
<dbReference type="PROSITE" id="PS00585">
    <property type="entry name" value="RIBOSOMAL_S5"/>
    <property type="match status" value="1"/>
</dbReference>
<dbReference type="PROSITE" id="PS50881">
    <property type="entry name" value="S5_DSRBD"/>
    <property type="match status" value="1"/>
</dbReference>
<protein>
    <recommendedName>
        <fullName evidence="1">Small ribosomal subunit protein uS5</fullName>
    </recommendedName>
    <alternativeName>
        <fullName evidence="2">30S ribosomal protein S5</fullName>
    </alternativeName>
</protein>
<gene>
    <name evidence="1" type="primary">rpsE</name>
    <name type="ordered locus">WS1700</name>
</gene>
<reference key="1">
    <citation type="journal article" date="2003" name="Proc. Natl. Acad. Sci. U.S.A.">
        <title>Complete genome sequence and analysis of Wolinella succinogenes.</title>
        <authorList>
            <person name="Baar C."/>
            <person name="Eppinger M."/>
            <person name="Raddatz G."/>
            <person name="Simon J."/>
            <person name="Lanz C."/>
            <person name="Klimmek O."/>
            <person name="Nandakumar R."/>
            <person name="Gross R."/>
            <person name="Rosinus A."/>
            <person name="Keller H."/>
            <person name="Jagtap P."/>
            <person name="Linke B."/>
            <person name="Meyer F."/>
            <person name="Lederer H."/>
            <person name="Schuster S.C."/>
        </authorList>
    </citation>
    <scope>NUCLEOTIDE SEQUENCE [LARGE SCALE GENOMIC DNA]</scope>
    <source>
        <strain>ATCC 29543 / DSM 1740 / CCUG 13145 / JCM 31913 / LMG 7466 / NCTC 11488 / FDC 602W</strain>
    </source>
</reference>
<keyword id="KW-1185">Reference proteome</keyword>
<keyword id="KW-0687">Ribonucleoprotein</keyword>
<keyword id="KW-0689">Ribosomal protein</keyword>
<keyword id="KW-0694">RNA-binding</keyword>
<keyword id="KW-0699">rRNA-binding</keyword>